<sequence length="198" mass="22269">MGVSWVFEAEQTAKSVERILEGIGAELMGQFQVDVIPYNPATPSTDYATNIVMHHSKCPQSTFSICPKTDFRVSPKAVCDRGFDLILGKLAGGLVIDNAGKIEINGNEYNIHSDWTVRVGTATQGTTVKGVVVEVEYDPTVIIVQCREMMAEFIKQVFNKYHETQPEIFKITEKPERYSTLDTMWQYLQIAAKLRKKT</sequence>
<keyword id="KW-0010">Activator</keyword>
<keyword id="KW-0539">Nucleus</keyword>
<keyword id="KW-1185">Reference proteome</keyword>
<keyword id="KW-0804">Transcription</keyword>
<keyword id="KW-0805">Transcription regulation</keyword>
<gene>
    <name type="primary">mdt-20</name>
    <name type="ORF">CBG13937</name>
</gene>
<evidence type="ECO:0000250" key="1"/>
<evidence type="ECO:0000305" key="2"/>
<accession>Q61A42</accession>
<accession>A8XIZ8</accession>
<name>MED20_CAEBR</name>
<feature type="chain" id="PRO_0000308559" description="Mediator of RNA polymerase II transcription subunit 20">
    <location>
        <begin position="1"/>
        <end position="198"/>
    </location>
</feature>
<protein>
    <recommendedName>
        <fullName>Mediator of RNA polymerase II transcription subunit 20</fullName>
    </recommendedName>
    <alternativeName>
        <fullName>Mediator complex subunit 20</fullName>
    </alternativeName>
</protein>
<proteinExistence type="inferred from homology"/>
<comment type="function">
    <text evidence="1">Component of the Mediator complex, a coactivator involved in the regulated transcription of nearly all RNA polymerase II-dependent genes. Mediator functions as a bridge to convey information from gene-specific regulatory proteins to the basal RNA polymerase II transcription machinery. Mediator is recruited to promoters by direct interactions with regulatory proteins and serves as a scaffold for the assembly of a functional preinitiation complex with RNA polymerase II and the general transcription factors (By similarity).</text>
</comment>
<comment type="subunit">
    <text evidence="1">Component of the Mediator complex.</text>
</comment>
<comment type="subcellular location">
    <subcellularLocation>
        <location evidence="2">Nucleus</location>
    </subcellularLocation>
</comment>
<comment type="similarity">
    <text evidence="2">Belongs to the Mediator complex subunit 20 family.</text>
</comment>
<dbReference type="EMBL" id="HE601467">
    <property type="protein sequence ID" value="CAP32625.3"/>
    <property type="molecule type" value="Genomic_DNA"/>
</dbReference>
<dbReference type="SMR" id="Q61A42"/>
<dbReference type="FunCoup" id="Q61A42">
    <property type="interactions" value="2539"/>
</dbReference>
<dbReference type="STRING" id="6238.Q61A42"/>
<dbReference type="EnsemblMetazoa" id="CBG13937.1">
    <property type="protein sequence ID" value="CBG13937.1"/>
    <property type="gene ID" value="WBGene00034614"/>
</dbReference>
<dbReference type="KEGG" id="cbr:CBG_13937"/>
<dbReference type="CTD" id="8576821"/>
<dbReference type="WormBase" id="CBG13937">
    <property type="protein sequence ID" value="CBP09544"/>
    <property type="gene ID" value="WBGene00034614"/>
    <property type="gene designation" value="Cbr-mdt-20"/>
</dbReference>
<dbReference type="eggNOG" id="KOG4309">
    <property type="taxonomic scope" value="Eukaryota"/>
</dbReference>
<dbReference type="HOGENOM" id="CLU_1385324_0_0_1"/>
<dbReference type="InParanoid" id="Q61A42"/>
<dbReference type="OMA" id="NIVMHHS"/>
<dbReference type="OrthoDB" id="1854899at2759"/>
<dbReference type="Proteomes" id="UP000008549">
    <property type="component" value="Unassembled WGS sequence"/>
</dbReference>
<dbReference type="GO" id="GO:0016592">
    <property type="term" value="C:mediator complex"/>
    <property type="evidence" value="ECO:0000318"/>
    <property type="project" value="GO_Central"/>
</dbReference>
<dbReference type="GO" id="GO:0003713">
    <property type="term" value="F:transcription coactivator activity"/>
    <property type="evidence" value="ECO:0000318"/>
    <property type="project" value="GO_Central"/>
</dbReference>
<dbReference type="GO" id="GO:0006357">
    <property type="term" value="P:regulation of transcription by RNA polymerase II"/>
    <property type="evidence" value="ECO:0000318"/>
    <property type="project" value="GO_Central"/>
</dbReference>
<dbReference type="InterPro" id="IPR013921">
    <property type="entry name" value="Mediator_Med20"/>
</dbReference>
<dbReference type="PANTHER" id="PTHR12465:SF0">
    <property type="entry name" value="MEDIATOR OF RNA POLYMERASE II TRANSCRIPTION SUBUNIT 20"/>
    <property type="match status" value="1"/>
</dbReference>
<dbReference type="PANTHER" id="PTHR12465">
    <property type="entry name" value="UBIQUITIN SPECIFIC PROTEASE HOMOLOG 49"/>
    <property type="match status" value="1"/>
</dbReference>
<dbReference type="Pfam" id="PF08612">
    <property type="entry name" value="Med20"/>
    <property type="match status" value="1"/>
</dbReference>
<reference key="1">
    <citation type="journal article" date="2003" name="PLoS Biol.">
        <title>The genome sequence of Caenorhabditis briggsae: a platform for comparative genomics.</title>
        <authorList>
            <person name="Stein L.D."/>
            <person name="Bao Z."/>
            <person name="Blasiar D."/>
            <person name="Blumenthal T."/>
            <person name="Brent M.R."/>
            <person name="Chen N."/>
            <person name="Chinwalla A."/>
            <person name="Clarke L."/>
            <person name="Clee C."/>
            <person name="Coghlan A."/>
            <person name="Coulson A."/>
            <person name="D'Eustachio P."/>
            <person name="Fitch D.H.A."/>
            <person name="Fulton L.A."/>
            <person name="Fulton R.E."/>
            <person name="Griffiths-Jones S."/>
            <person name="Harris T.W."/>
            <person name="Hillier L.W."/>
            <person name="Kamath R."/>
            <person name="Kuwabara P.E."/>
            <person name="Mardis E.R."/>
            <person name="Marra M.A."/>
            <person name="Miner T.L."/>
            <person name="Minx P."/>
            <person name="Mullikin J.C."/>
            <person name="Plumb R.W."/>
            <person name="Rogers J."/>
            <person name="Schein J.E."/>
            <person name="Sohrmann M."/>
            <person name="Spieth J."/>
            <person name="Stajich J.E."/>
            <person name="Wei C."/>
            <person name="Willey D."/>
            <person name="Wilson R.K."/>
            <person name="Durbin R.M."/>
            <person name="Waterston R.H."/>
        </authorList>
    </citation>
    <scope>NUCLEOTIDE SEQUENCE [LARGE SCALE GENOMIC DNA]</scope>
    <source>
        <strain>AF16</strain>
    </source>
</reference>
<organism>
    <name type="scientific">Caenorhabditis briggsae</name>
    <dbReference type="NCBI Taxonomy" id="6238"/>
    <lineage>
        <taxon>Eukaryota</taxon>
        <taxon>Metazoa</taxon>
        <taxon>Ecdysozoa</taxon>
        <taxon>Nematoda</taxon>
        <taxon>Chromadorea</taxon>
        <taxon>Rhabditida</taxon>
        <taxon>Rhabditina</taxon>
        <taxon>Rhabditomorpha</taxon>
        <taxon>Rhabditoidea</taxon>
        <taxon>Rhabditidae</taxon>
        <taxon>Peloderinae</taxon>
        <taxon>Caenorhabditis</taxon>
    </lineage>
</organism>